<comment type="function">
    <text evidence="1">Specifically methylates the cytosine at position 1962 (m5C1962) of 23S rRNA.</text>
</comment>
<comment type="catalytic activity">
    <reaction evidence="1">
        <text>cytidine(1962) in 23S rRNA + S-adenosyl-L-methionine = 5-methylcytidine(1962) in 23S rRNA + S-adenosyl-L-homocysteine + H(+)</text>
        <dbReference type="Rhea" id="RHEA:42912"/>
        <dbReference type="Rhea" id="RHEA-COMP:10382"/>
        <dbReference type="Rhea" id="RHEA-COMP:10386"/>
        <dbReference type="ChEBI" id="CHEBI:15378"/>
        <dbReference type="ChEBI" id="CHEBI:57856"/>
        <dbReference type="ChEBI" id="CHEBI:59789"/>
        <dbReference type="ChEBI" id="CHEBI:74483"/>
        <dbReference type="ChEBI" id="CHEBI:82748"/>
        <dbReference type="EC" id="2.1.1.191"/>
    </reaction>
</comment>
<comment type="subcellular location">
    <subcellularLocation>
        <location evidence="1">Cytoplasm</location>
    </subcellularLocation>
</comment>
<comment type="similarity">
    <text evidence="1">Belongs to the methyltransferase superfamily. RlmI family.</text>
</comment>
<reference key="1">
    <citation type="journal article" date="2002" name="Nat. Biotechnol.">
        <title>Genome sequence of the dissimilatory metal ion-reducing bacterium Shewanella oneidensis.</title>
        <authorList>
            <person name="Heidelberg J.F."/>
            <person name="Paulsen I.T."/>
            <person name="Nelson K.E."/>
            <person name="Gaidos E.J."/>
            <person name="Nelson W.C."/>
            <person name="Read T.D."/>
            <person name="Eisen J.A."/>
            <person name="Seshadri R."/>
            <person name="Ward N.L."/>
            <person name="Methe B.A."/>
            <person name="Clayton R.A."/>
            <person name="Meyer T."/>
            <person name="Tsapin A."/>
            <person name="Scott J."/>
            <person name="Beanan M.J."/>
            <person name="Brinkac L.M."/>
            <person name="Daugherty S.C."/>
            <person name="DeBoy R.T."/>
            <person name="Dodson R.J."/>
            <person name="Durkin A.S."/>
            <person name="Haft D.H."/>
            <person name="Kolonay J.F."/>
            <person name="Madupu R."/>
            <person name="Peterson J.D."/>
            <person name="Umayam L.A."/>
            <person name="White O."/>
            <person name="Wolf A.M."/>
            <person name="Vamathevan J.J."/>
            <person name="Weidman J.F."/>
            <person name="Impraim M."/>
            <person name="Lee K."/>
            <person name="Berry K.J."/>
            <person name="Lee C."/>
            <person name="Mueller J."/>
            <person name="Khouri H.M."/>
            <person name="Gill J."/>
            <person name="Utterback T.R."/>
            <person name="McDonald L.A."/>
            <person name="Feldblyum T.V."/>
            <person name="Smith H.O."/>
            <person name="Venter J.C."/>
            <person name="Nealson K.H."/>
            <person name="Fraser C.M."/>
        </authorList>
    </citation>
    <scope>NUCLEOTIDE SEQUENCE [LARGE SCALE GENOMIC DNA]</scope>
    <source>
        <strain>ATCC 700550 / JCM 31522 / CIP 106686 / LMG 19005 / NCIMB 14063 / MR-1</strain>
    </source>
</reference>
<dbReference type="EC" id="2.1.1.191" evidence="1"/>
<dbReference type="EMBL" id="AE014299">
    <property type="protein sequence ID" value="AAN54219.1"/>
    <property type="molecule type" value="Genomic_DNA"/>
</dbReference>
<dbReference type="RefSeq" id="NP_716774.1">
    <property type="nucleotide sequence ID" value="NC_004347.2"/>
</dbReference>
<dbReference type="RefSeq" id="WP_011071381.1">
    <property type="nucleotide sequence ID" value="NC_004347.2"/>
</dbReference>
<dbReference type="SMR" id="Q8EHR8"/>
<dbReference type="STRING" id="211586.SO_1149"/>
<dbReference type="PaxDb" id="211586-SO_1149"/>
<dbReference type="KEGG" id="son:SO_1149"/>
<dbReference type="PATRIC" id="fig|211586.12.peg.1102"/>
<dbReference type="eggNOG" id="COG1092">
    <property type="taxonomic scope" value="Bacteria"/>
</dbReference>
<dbReference type="HOGENOM" id="CLU_014042_0_0_6"/>
<dbReference type="OrthoDB" id="9805492at2"/>
<dbReference type="PhylomeDB" id="Q8EHR8"/>
<dbReference type="BioCyc" id="SONE211586:G1GMP-1053-MONOMER"/>
<dbReference type="Proteomes" id="UP000008186">
    <property type="component" value="Chromosome"/>
</dbReference>
<dbReference type="GO" id="GO:0005737">
    <property type="term" value="C:cytoplasm"/>
    <property type="evidence" value="ECO:0007669"/>
    <property type="project" value="UniProtKB-SubCell"/>
</dbReference>
<dbReference type="GO" id="GO:0003723">
    <property type="term" value="F:RNA binding"/>
    <property type="evidence" value="ECO:0007669"/>
    <property type="project" value="UniProtKB-KW"/>
</dbReference>
<dbReference type="GO" id="GO:0016434">
    <property type="term" value="F:rRNA (cytosine) methyltransferase activity"/>
    <property type="evidence" value="ECO:0007669"/>
    <property type="project" value="UniProtKB-UniRule"/>
</dbReference>
<dbReference type="CDD" id="cd02440">
    <property type="entry name" value="AdoMet_MTases"/>
    <property type="match status" value="1"/>
</dbReference>
<dbReference type="CDD" id="cd21153">
    <property type="entry name" value="PUA_RlmI"/>
    <property type="match status" value="1"/>
</dbReference>
<dbReference type="CDD" id="cd11572">
    <property type="entry name" value="RlmI_M_like"/>
    <property type="match status" value="1"/>
</dbReference>
<dbReference type="Gene3D" id="2.30.130.10">
    <property type="entry name" value="PUA domain"/>
    <property type="match status" value="1"/>
</dbReference>
<dbReference type="Gene3D" id="3.30.750.80">
    <property type="entry name" value="RNA methyltransferase domain (HRMD) like"/>
    <property type="match status" value="1"/>
</dbReference>
<dbReference type="Gene3D" id="3.40.50.150">
    <property type="entry name" value="Vaccinia Virus protein VP39"/>
    <property type="match status" value="1"/>
</dbReference>
<dbReference type="HAMAP" id="MF_01857">
    <property type="entry name" value="23SrRNA_methyltr_I"/>
    <property type="match status" value="1"/>
</dbReference>
<dbReference type="InterPro" id="IPR002478">
    <property type="entry name" value="PUA"/>
</dbReference>
<dbReference type="InterPro" id="IPR015947">
    <property type="entry name" value="PUA-like_sf"/>
</dbReference>
<dbReference type="InterPro" id="IPR036974">
    <property type="entry name" value="PUA_sf"/>
</dbReference>
<dbReference type="InterPro" id="IPR023542">
    <property type="entry name" value="RLMI"/>
</dbReference>
<dbReference type="InterPro" id="IPR041532">
    <property type="entry name" value="RlmI-like_PUA"/>
</dbReference>
<dbReference type="InterPro" id="IPR019614">
    <property type="entry name" value="SAM-dep_methyl-trfase"/>
</dbReference>
<dbReference type="InterPro" id="IPR029063">
    <property type="entry name" value="SAM-dependent_MTases_sf"/>
</dbReference>
<dbReference type="PANTHER" id="PTHR42873">
    <property type="entry name" value="RIBOSOMAL RNA LARGE SUBUNIT METHYLTRANSFERASE"/>
    <property type="match status" value="1"/>
</dbReference>
<dbReference type="PANTHER" id="PTHR42873:SF1">
    <property type="entry name" value="S-ADENOSYLMETHIONINE-DEPENDENT METHYLTRANSFERASE DOMAIN-CONTAINING PROTEIN"/>
    <property type="match status" value="1"/>
</dbReference>
<dbReference type="Pfam" id="PF10672">
    <property type="entry name" value="Methyltrans_SAM"/>
    <property type="match status" value="1"/>
</dbReference>
<dbReference type="Pfam" id="PF17785">
    <property type="entry name" value="PUA_3"/>
    <property type="match status" value="1"/>
</dbReference>
<dbReference type="SMART" id="SM00359">
    <property type="entry name" value="PUA"/>
    <property type="match status" value="1"/>
</dbReference>
<dbReference type="SUPFAM" id="SSF88697">
    <property type="entry name" value="PUA domain-like"/>
    <property type="match status" value="1"/>
</dbReference>
<dbReference type="SUPFAM" id="SSF53335">
    <property type="entry name" value="S-adenosyl-L-methionine-dependent methyltransferases"/>
    <property type="match status" value="1"/>
</dbReference>
<dbReference type="PROSITE" id="PS50890">
    <property type="entry name" value="PUA"/>
    <property type="match status" value="1"/>
</dbReference>
<organism>
    <name type="scientific">Shewanella oneidensis (strain ATCC 700550 / JCM 31522 / CIP 106686 / LMG 19005 / NCIMB 14063 / MR-1)</name>
    <dbReference type="NCBI Taxonomy" id="211586"/>
    <lineage>
        <taxon>Bacteria</taxon>
        <taxon>Pseudomonadati</taxon>
        <taxon>Pseudomonadota</taxon>
        <taxon>Gammaproteobacteria</taxon>
        <taxon>Alteromonadales</taxon>
        <taxon>Shewanellaceae</taxon>
        <taxon>Shewanella</taxon>
    </lineage>
</organism>
<evidence type="ECO:0000255" key="1">
    <source>
        <dbReference type="HAMAP-Rule" id="MF_01857"/>
    </source>
</evidence>
<protein>
    <recommendedName>
        <fullName evidence="1">Ribosomal RNA large subunit methyltransferase I</fullName>
        <ecNumber evidence="1">2.1.1.191</ecNumber>
    </recommendedName>
    <alternativeName>
        <fullName evidence="1">23S rRNA m5C1962 methyltransferase</fullName>
    </alternativeName>
    <alternativeName>
        <fullName evidence="1">rRNA (cytosine-C(5)-)-methyltransferase RlmI</fullName>
    </alternativeName>
</protein>
<sequence>MAIRIKLKPGREKSLERRHPWVFSNGIHNVKGKPEPGQTVDVVAHDGHWLGRGAWSGESQIQVRVWTFDREEEIDREFFKRRILRAQAGRDDLIREQGLTGYRLIAAESDGLPGITIDKYANVLVCQLLSMGADVWRDTIVDVLAELYPDCAIYERSDVDSRKKEGLASTMGLLHGTLPEMPLIIEENGIKIAVDVTKGHKTGFYLDQRDNRAIAARFVKGKSVLNCFCYTGTFGLYAAKAGAASIENVDVSSLALDTARLNMRVNGLSDDNVHYNEADVFKLLRQYRDEGKTFDVIVLDPPKFADNKSQLNGACRGYKDINMIALQLLNPGGVLLTFSCSGLMPADLFQKIVADAALDAKREIQFIERLSQASDHPIGSAFPEGFYLKGLVARVW</sequence>
<gene>
    <name evidence="1" type="primary">rlmI</name>
    <name type="ordered locus">SO_1149</name>
</gene>
<feature type="chain" id="PRO_0000366260" description="Ribosomal RNA large subunit methyltransferase I">
    <location>
        <begin position="1"/>
        <end position="396"/>
    </location>
</feature>
<feature type="domain" description="PUA" evidence="1">
    <location>
        <begin position="2"/>
        <end position="79"/>
    </location>
</feature>
<name>RLMI_SHEON</name>
<keyword id="KW-0963">Cytoplasm</keyword>
<keyword id="KW-0489">Methyltransferase</keyword>
<keyword id="KW-1185">Reference proteome</keyword>
<keyword id="KW-0694">RNA-binding</keyword>
<keyword id="KW-0698">rRNA processing</keyword>
<keyword id="KW-0949">S-adenosyl-L-methionine</keyword>
<keyword id="KW-0808">Transferase</keyword>
<accession>Q8EHR8</accession>
<proteinExistence type="inferred from homology"/>